<proteinExistence type="inferred from homology"/>
<accession>Q7UMN0</accession>
<organism>
    <name type="scientific">Rhodopirellula baltica (strain DSM 10527 / NCIMB 13988 / SH1)</name>
    <dbReference type="NCBI Taxonomy" id="243090"/>
    <lineage>
        <taxon>Bacteria</taxon>
        <taxon>Pseudomonadati</taxon>
        <taxon>Planctomycetota</taxon>
        <taxon>Planctomycetia</taxon>
        <taxon>Pirellulales</taxon>
        <taxon>Pirellulaceae</taxon>
        <taxon>Rhodopirellula</taxon>
    </lineage>
</organism>
<dbReference type="EMBL" id="BX294148">
    <property type="protein sequence ID" value="CAD75886.1"/>
    <property type="molecule type" value="Genomic_DNA"/>
</dbReference>
<dbReference type="RefSeq" id="NP_868509.1">
    <property type="nucleotide sequence ID" value="NC_005027.1"/>
</dbReference>
<dbReference type="RefSeq" id="WP_007324504.1">
    <property type="nucleotide sequence ID" value="NC_005027.1"/>
</dbReference>
<dbReference type="SMR" id="Q7UMN0"/>
<dbReference type="STRING" id="243090.RB8725"/>
<dbReference type="EnsemblBacteria" id="CAD75886">
    <property type="protein sequence ID" value="CAD75886"/>
    <property type="gene ID" value="RB8725"/>
</dbReference>
<dbReference type="GeneID" id="90611374"/>
<dbReference type="KEGG" id="rba:RB8725"/>
<dbReference type="PATRIC" id="fig|243090.15.peg.4186"/>
<dbReference type="eggNOG" id="COG0267">
    <property type="taxonomic scope" value="Bacteria"/>
</dbReference>
<dbReference type="HOGENOM" id="CLU_190949_0_2_0"/>
<dbReference type="InParanoid" id="Q7UMN0"/>
<dbReference type="OrthoDB" id="197660at2"/>
<dbReference type="Proteomes" id="UP000001025">
    <property type="component" value="Chromosome"/>
</dbReference>
<dbReference type="GO" id="GO:0005737">
    <property type="term" value="C:cytoplasm"/>
    <property type="evidence" value="ECO:0007669"/>
    <property type="project" value="UniProtKB-ARBA"/>
</dbReference>
<dbReference type="GO" id="GO:1990904">
    <property type="term" value="C:ribonucleoprotein complex"/>
    <property type="evidence" value="ECO:0007669"/>
    <property type="project" value="UniProtKB-KW"/>
</dbReference>
<dbReference type="GO" id="GO:0005840">
    <property type="term" value="C:ribosome"/>
    <property type="evidence" value="ECO:0007669"/>
    <property type="project" value="UniProtKB-KW"/>
</dbReference>
<dbReference type="GO" id="GO:0003735">
    <property type="term" value="F:structural constituent of ribosome"/>
    <property type="evidence" value="ECO:0007669"/>
    <property type="project" value="InterPro"/>
</dbReference>
<dbReference type="GO" id="GO:0006412">
    <property type="term" value="P:translation"/>
    <property type="evidence" value="ECO:0007669"/>
    <property type="project" value="UniProtKB-UniRule"/>
</dbReference>
<dbReference type="Gene3D" id="2.20.28.120">
    <property type="entry name" value="Ribosomal protein L33"/>
    <property type="match status" value="1"/>
</dbReference>
<dbReference type="HAMAP" id="MF_00294">
    <property type="entry name" value="Ribosomal_bL33"/>
    <property type="match status" value="1"/>
</dbReference>
<dbReference type="InterPro" id="IPR001705">
    <property type="entry name" value="Ribosomal_bL33"/>
</dbReference>
<dbReference type="InterPro" id="IPR038584">
    <property type="entry name" value="Ribosomal_bL33_sf"/>
</dbReference>
<dbReference type="InterPro" id="IPR011332">
    <property type="entry name" value="Ribosomal_zn-bd"/>
</dbReference>
<dbReference type="NCBIfam" id="TIGR01023">
    <property type="entry name" value="rpmG_bact"/>
    <property type="match status" value="1"/>
</dbReference>
<dbReference type="Pfam" id="PF00471">
    <property type="entry name" value="Ribosomal_L33"/>
    <property type="match status" value="1"/>
</dbReference>
<dbReference type="SUPFAM" id="SSF57829">
    <property type="entry name" value="Zn-binding ribosomal proteins"/>
    <property type="match status" value="1"/>
</dbReference>
<feature type="chain" id="PRO_0000226044" description="Large ribosomal subunit protein bL33">
    <location>
        <begin position="1"/>
        <end position="54"/>
    </location>
</feature>
<protein>
    <recommendedName>
        <fullName evidence="1">Large ribosomal subunit protein bL33</fullName>
    </recommendedName>
    <alternativeName>
        <fullName evidence="2">50S ribosomal protein L33</fullName>
    </alternativeName>
</protein>
<comment type="similarity">
    <text evidence="1">Belongs to the bacterial ribosomal protein bL33 family.</text>
</comment>
<gene>
    <name evidence="1" type="primary">rpmG</name>
    <name type="ordered locus">RB8725</name>
</gene>
<sequence length="54" mass="6465">MSKSKKKAETIFLVCEETGQYNYTLRKKPGGEKLRLKKYNPNLRKHTWHAEKKK</sequence>
<name>RL33_RHOBA</name>
<reference key="1">
    <citation type="journal article" date="2003" name="Proc. Natl. Acad. Sci. U.S.A.">
        <title>Complete genome sequence of the marine planctomycete Pirellula sp. strain 1.</title>
        <authorList>
            <person name="Gloeckner F.O."/>
            <person name="Kube M."/>
            <person name="Bauer M."/>
            <person name="Teeling H."/>
            <person name="Lombardot T."/>
            <person name="Ludwig W."/>
            <person name="Gade D."/>
            <person name="Beck A."/>
            <person name="Borzym K."/>
            <person name="Heitmann K."/>
            <person name="Rabus R."/>
            <person name="Schlesner H."/>
            <person name="Amann R."/>
            <person name="Reinhardt R."/>
        </authorList>
    </citation>
    <scope>NUCLEOTIDE SEQUENCE [LARGE SCALE GENOMIC DNA]</scope>
    <source>
        <strain>DSM 10527 / NCIMB 13988 / SH1</strain>
    </source>
</reference>
<keyword id="KW-1185">Reference proteome</keyword>
<keyword id="KW-0687">Ribonucleoprotein</keyword>
<keyword id="KW-0689">Ribosomal protein</keyword>
<evidence type="ECO:0000255" key="1">
    <source>
        <dbReference type="HAMAP-Rule" id="MF_00294"/>
    </source>
</evidence>
<evidence type="ECO:0000305" key="2"/>